<sequence length="100" mass="11091">MRLTPHEQERLLLSYAAEVARRRQARGLRLNHPEAVALITDHVLEGARDGRTVAELMASGCEVLGRDDVMEGVPEMIADVQVEATFPDGTKLVTVHHPIR</sequence>
<evidence type="ECO:0000255" key="1">
    <source>
        <dbReference type="HAMAP-Rule" id="MF_00739"/>
    </source>
</evidence>
<name>URE3_MYCUA</name>
<reference key="1">
    <citation type="journal article" date="2007" name="Genome Res.">
        <title>Reductive evolution and niche adaptation inferred from the genome of Mycobacterium ulcerans, the causative agent of Buruli ulcer.</title>
        <authorList>
            <person name="Stinear T.P."/>
            <person name="Seemann T."/>
            <person name="Pidot S."/>
            <person name="Frigui W."/>
            <person name="Reysset G."/>
            <person name="Garnier T."/>
            <person name="Meurice G."/>
            <person name="Simon D."/>
            <person name="Bouchier C."/>
            <person name="Ma L."/>
            <person name="Tichit M."/>
            <person name="Porter J.L."/>
            <person name="Ryan J."/>
            <person name="Johnson P.D.R."/>
            <person name="Davies J.K."/>
            <person name="Jenkin G.A."/>
            <person name="Small P.L.C."/>
            <person name="Jones L.M."/>
            <person name="Tekaia F."/>
            <person name="Laval F."/>
            <person name="Daffe M."/>
            <person name="Parkhill J."/>
            <person name="Cole S.T."/>
        </authorList>
    </citation>
    <scope>NUCLEOTIDE SEQUENCE [LARGE SCALE GENOMIC DNA]</scope>
    <source>
        <strain>Agy99</strain>
    </source>
</reference>
<comment type="catalytic activity">
    <reaction evidence="1">
        <text>urea + 2 H2O + H(+) = hydrogencarbonate + 2 NH4(+)</text>
        <dbReference type="Rhea" id="RHEA:20557"/>
        <dbReference type="ChEBI" id="CHEBI:15377"/>
        <dbReference type="ChEBI" id="CHEBI:15378"/>
        <dbReference type="ChEBI" id="CHEBI:16199"/>
        <dbReference type="ChEBI" id="CHEBI:17544"/>
        <dbReference type="ChEBI" id="CHEBI:28938"/>
        <dbReference type="EC" id="3.5.1.5"/>
    </reaction>
</comment>
<comment type="pathway">
    <text evidence="1">Nitrogen metabolism; urea degradation; CO(2) and NH(3) from urea (urease route): step 1/1.</text>
</comment>
<comment type="subunit">
    <text evidence="1">Heterotrimer of UreA (gamma), UreB (beta) and UreC (alpha) subunits. Three heterotrimers associate to form the active enzyme.</text>
</comment>
<comment type="subcellular location">
    <subcellularLocation>
        <location evidence="1">Cytoplasm</location>
    </subcellularLocation>
</comment>
<comment type="similarity">
    <text evidence="1">Belongs to the urease gamma subunit family.</text>
</comment>
<accession>A0PSG4</accession>
<protein>
    <recommendedName>
        <fullName evidence="1">Urease subunit gamma</fullName>
        <ecNumber evidence="1">3.5.1.5</ecNumber>
    </recommendedName>
    <alternativeName>
        <fullName evidence="1">Urea amidohydrolase subunit gamma</fullName>
    </alternativeName>
</protein>
<gene>
    <name evidence="1" type="primary">ureA</name>
    <name type="ordered locus">MUL_3031</name>
</gene>
<dbReference type="EC" id="3.5.1.5" evidence="1"/>
<dbReference type="EMBL" id="CP000325">
    <property type="protein sequence ID" value="ABL05283.1"/>
    <property type="molecule type" value="Genomic_DNA"/>
</dbReference>
<dbReference type="RefSeq" id="WP_011740895.1">
    <property type="nucleotide sequence ID" value="NC_008611.1"/>
</dbReference>
<dbReference type="SMR" id="A0PSG4"/>
<dbReference type="KEGG" id="mul:MUL_3031"/>
<dbReference type="eggNOG" id="COG0831">
    <property type="taxonomic scope" value="Bacteria"/>
</dbReference>
<dbReference type="HOGENOM" id="CLU_145825_1_0_11"/>
<dbReference type="UniPathway" id="UPA00258">
    <property type="reaction ID" value="UER00370"/>
</dbReference>
<dbReference type="Proteomes" id="UP000000765">
    <property type="component" value="Chromosome"/>
</dbReference>
<dbReference type="GO" id="GO:0005737">
    <property type="term" value="C:cytoplasm"/>
    <property type="evidence" value="ECO:0007669"/>
    <property type="project" value="UniProtKB-SubCell"/>
</dbReference>
<dbReference type="GO" id="GO:0016151">
    <property type="term" value="F:nickel cation binding"/>
    <property type="evidence" value="ECO:0007669"/>
    <property type="project" value="InterPro"/>
</dbReference>
<dbReference type="GO" id="GO:0009039">
    <property type="term" value="F:urease activity"/>
    <property type="evidence" value="ECO:0007669"/>
    <property type="project" value="UniProtKB-UniRule"/>
</dbReference>
<dbReference type="GO" id="GO:0043419">
    <property type="term" value="P:urea catabolic process"/>
    <property type="evidence" value="ECO:0007669"/>
    <property type="project" value="UniProtKB-UniRule"/>
</dbReference>
<dbReference type="CDD" id="cd00390">
    <property type="entry name" value="Urease_gamma"/>
    <property type="match status" value="1"/>
</dbReference>
<dbReference type="Gene3D" id="3.30.280.10">
    <property type="entry name" value="Urease, gamma-like subunit"/>
    <property type="match status" value="1"/>
</dbReference>
<dbReference type="HAMAP" id="MF_00739">
    <property type="entry name" value="Urease_gamma"/>
    <property type="match status" value="1"/>
</dbReference>
<dbReference type="InterPro" id="IPR012010">
    <property type="entry name" value="Urease_gamma"/>
</dbReference>
<dbReference type="InterPro" id="IPR002026">
    <property type="entry name" value="Urease_gamma/gamma-beta_su"/>
</dbReference>
<dbReference type="InterPro" id="IPR036463">
    <property type="entry name" value="Urease_gamma_sf"/>
</dbReference>
<dbReference type="InterPro" id="IPR050069">
    <property type="entry name" value="Urease_subunit"/>
</dbReference>
<dbReference type="NCBIfam" id="NF009712">
    <property type="entry name" value="PRK13241.1"/>
    <property type="match status" value="1"/>
</dbReference>
<dbReference type="NCBIfam" id="TIGR00193">
    <property type="entry name" value="urease_gam"/>
    <property type="match status" value="1"/>
</dbReference>
<dbReference type="PANTHER" id="PTHR33569">
    <property type="entry name" value="UREASE"/>
    <property type="match status" value="1"/>
</dbReference>
<dbReference type="PANTHER" id="PTHR33569:SF1">
    <property type="entry name" value="UREASE"/>
    <property type="match status" value="1"/>
</dbReference>
<dbReference type="Pfam" id="PF00547">
    <property type="entry name" value="Urease_gamma"/>
    <property type="match status" value="1"/>
</dbReference>
<dbReference type="PIRSF" id="PIRSF001223">
    <property type="entry name" value="Urease_gamma"/>
    <property type="match status" value="1"/>
</dbReference>
<dbReference type="SUPFAM" id="SSF54111">
    <property type="entry name" value="Urease, gamma-subunit"/>
    <property type="match status" value="1"/>
</dbReference>
<proteinExistence type="inferred from homology"/>
<organism>
    <name type="scientific">Mycobacterium ulcerans (strain Agy99)</name>
    <dbReference type="NCBI Taxonomy" id="362242"/>
    <lineage>
        <taxon>Bacteria</taxon>
        <taxon>Bacillati</taxon>
        <taxon>Actinomycetota</taxon>
        <taxon>Actinomycetes</taxon>
        <taxon>Mycobacteriales</taxon>
        <taxon>Mycobacteriaceae</taxon>
        <taxon>Mycobacterium</taxon>
        <taxon>Mycobacterium ulcerans group</taxon>
    </lineage>
</organism>
<keyword id="KW-0963">Cytoplasm</keyword>
<keyword id="KW-0378">Hydrolase</keyword>
<feature type="chain" id="PRO_1000046343" description="Urease subunit gamma">
    <location>
        <begin position="1"/>
        <end position="100"/>
    </location>
</feature>